<proteinExistence type="inferred from homology"/>
<accession>Q97CW2</accession>
<protein>
    <recommendedName>
        <fullName evidence="1">tRNA modification GTPase MnmE</fullName>
        <ecNumber evidence="1">3.6.-.-</ecNumber>
    </recommendedName>
</protein>
<sequence length="459" mass="51187">MKEFDTIAAISTAIGNSGISIIRVSGKEALSIVDKVFKGKSKKGIIEMNTYTMRYGNIVELSNGDIIDEVIVSFMKGPKSFTGENVVEVNCHGGMYPTKRVLEEIIRAGARLAEPGEFTKRAFLNGRLDLSQAEAVMDIINSKTELSMKSAVAQSEGVISREINKLRQRILEIIAHIEATVDYPEDDLEEVTAENVSKDLNDILKEIDELILSADEGKILREGLNTVIIGKPNVGKSSLLNLLLDEKRAIVTDIPGTTRDVIEEYINISGIPIKIVDTAGIRETEDVIEKMGVERSKEKMENADLIIFMIDSSKKIDAEDLEIIDYIKDKKYIVLLNKVDLKNREDKSKLDLLNKDNIIEFSVKEKVGLEKLKDTIENMFATGNLQHSNTMITNTRHKEALLRAREHCTTSLKALQDTLAIDLASIDIRNAWTALGEITGETLQEDLIDKIFKDFCLGK</sequence>
<reference key="1">
    <citation type="journal article" date="2001" name="J. Bacteriol.">
        <title>Genome sequence and comparative analysis of the solvent-producing bacterium Clostridium acetobutylicum.</title>
        <authorList>
            <person name="Noelling J."/>
            <person name="Breton G."/>
            <person name="Omelchenko M.V."/>
            <person name="Makarova K.S."/>
            <person name="Zeng Q."/>
            <person name="Gibson R."/>
            <person name="Lee H.M."/>
            <person name="Dubois J."/>
            <person name="Qiu D."/>
            <person name="Hitti J."/>
            <person name="Wolf Y.I."/>
            <person name="Tatusov R.L."/>
            <person name="Sabathe F."/>
            <person name="Doucette-Stamm L.A."/>
            <person name="Soucaille P."/>
            <person name="Daly M.J."/>
            <person name="Bennett G.N."/>
            <person name="Koonin E.V."/>
            <person name="Smith D.R."/>
        </authorList>
    </citation>
    <scope>NUCLEOTIDE SEQUENCE [LARGE SCALE GENOMIC DNA]</scope>
    <source>
        <strain>ATCC 824 / DSM 792 / JCM 1419 / IAM 19013 / LMG 5710 / NBRC 13948 / NRRL B-527 / VKM B-1787 / 2291 / W</strain>
    </source>
</reference>
<gene>
    <name evidence="1" type="primary">mnmE</name>
    <name evidence="1" type="synonym">trmE</name>
    <name type="ordered locus">CA_C3734</name>
</gene>
<keyword id="KW-0963">Cytoplasm</keyword>
<keyword id="KW-0342">GTP-binding</keyword>
<keyword id="KW-0378">Hydrolase</keyword>
<keyword id="KW-0460">Magnesium</keyword>
<keyword id="KW-0479">Metal-binding</keyword>
<keyword id="KW-0547">Nucleotide-binding</keyword>
<keyword id="KW-0630">Potassium</keyword>
<keyword id="KW-1185">Reference proteome</keyword>
<keyword id="KW-0819">tRNA processing</keyword>
<evidence type="ECO:0000255" key="1">
    <source>
        <dbReference type="HAMAP-Rule" id="MF_00379"/>
    </source>
</evidence>
<name>MNME_CLOAB</name>
<comment type="function">
    <text evidence="1">Exhibits a very high intrinsic GTPase hydrolysis rate. Involved in the addition of a carboxymethylaminomethyl (cmnm) group at the wobble position (U34) of certain tRNAs, forming tRNA-cmnm(5)s(2)U34.</text>
</comment>
<comment type="cofactor">
    <cofactor evidence="1">
        <name>K(+)</name>
        <dbReference type="ChEBI" id="CHEBI:29103"/>
    </cofactor>
    <text evidence="1">Binds 1 potassium ion per subunit.</text>
</comment>
<comment type="subunit">
    <text evidence="1">Homodimer. Heterotetramer of two MnmE and two MnmG subunits.</text>
</comment>
<comment type="subcellular location">
    <subcellularLocation>
        <location evidence="1">Cytoplasm</location>
    </subcellularLocation>
</comment>
<comment type="similarity">
    <text evidence="1">Belongs to the TRAFAC class TrmE-Era-EngA-EngB-Septin-like GTPase superfamily. TrmE GTPase family.</text>
</comment>
<dbReference type="EC" id="3.6.-.-" evidence="1"/>
<dbReference type="EMBL" id="AE001437">
    <property type="protein sequence ID" value="AAK81654.1"/>
    <property type="molecule type" value="Genomic_DNA"/>
</dbReference>
<dbReference type="PIR" id="C97358">
    <property type="entry name" value="C97358"/>
</dbReference>
<dbReference type="RefSeq" id="NP_350314.1">
    <property type="nucleotide sequence ID" value="NC_003030.1"/>
</dbReference>
<dbReference type="RefSeq" id="WP_010966994.1">
    <property type="nucleotide sequence ID" value="NC_003030.1"/>
</dbReference>
<dbReference type="SMR" id="Q97CW2"/>
<dbReference type="STRING" id="272562.CA_C3734"/>
<dbReference type="GeneID" id="45000230"/>
<dbReference type="KEGG" id="cac:CA_C3734"/>
<dbReference type="PATRIC" id="fig|272562.8.peg.3924"/>
<dbReference type="eggNOG" id="COG0486">
    <property type="taxonomic scope" value="Bacteria"/>
</dbReference>
<dbReference type="HOGENOM" id="CLU_019624_4_1_9"/>
<dbReference type="OrthoDB" id="9805918at2"/>
<dbReference type="Proteomes" id="UP000000814">
    <property type="component" value="Chromosome"/>
</dbReference>
<dbReference type="GO" id="GO:0005829">
    <property type="term" value="C:cytosol"/>
    <property type="evidence" value="ECO:0007669"/>
    <property type="project" value="TreeGrafter"/>
</dbReference>
<dbReference type="GO" id="GO:0005525">
    <property type="term" value="F:GTP binding"/>
    <property type="evidence" value="ECO:0007669"/>
    <property type="project" value="UniProtKB-UniRule"/>
</dbReference>
<dbReference type="GO" id="GO:0003924">
    <property type="term" value="F:GTPase activity"/>
    <property type="evidence" value="ECO:0007669"/>
    <property type="project" value="UniProtKB-UniRule"/>
</dbReference>
<dbReference type="GO" id="GO:0046872">
    <property type="term" value="F:metal ion binding"/>
    <property type="evidence" value="ECO:0007669"/>
    <property type="project" value="UniProtKB-KW"/>
</dbReference>
<dbReference type="GO" id="GO:0030488">
    <property type="term" value="P:tRNA methylation"/>
    <property type="evidence" value="ECO:0007669"/>
    <property type="project" value="TreeGrafter"/>
</dbReference>
<dbReference type="GO" id="GO:0002098">
    <property type="term" value="P:tRNA wobble uridine modification"/>
    <property type="evidence" value="ECO:0007669"/>
    <property type="project" value="TreeGrafter"/>
</dbReference>
<dbReference type="CDD" id="cd04164">
    <property type="entry name" value="trmE"/>
    <property type="match status" value="1"/>
</dbReference>
<dbReference type="CDD" id="cd14858">
    <property type="entry name" value="TrmE_N"/>
    <property type="match status" value="1"/>
</dbReference>
<dbReference type="FunFam" id="3.30.1360.120:FF:000003">
    <property type="entry name" value="tRNA modification GTPase MnmE"/>
    <property type="match status" value="1"/>
</dbReference>
<dbReference type="FunFam" id="3.40.50.300:FF:000494">
    <property type="entry name" value="tRNA modification GTPase MnmE"/>
    <property type="match status" value="1"/>
</dbReference>
<dbReference type="Gene3D" id="3.40.50.300">
    <property type="entry name" value="P-loop containing nucleotide triphosphate hydrolases"/>
    <property type="match status" value="1"/>
</dbReference>
<dbReference type="Gene3D" id="3.30.1360.120">
    <property type="entry name" value="Probable tRNA modification gtpase trme, domain 1"/>
    <property type="match status" value="1"/>
</dbReference>
<dbReference type="Gene3D" id="1.20.120.430">
    <property type="entry name" value="tRNA modification GTPase MnmE domain 2"/>
    <property type="match status" value="1"/>
</dbReference>
<dbReference type="HAMAP" id="MF_00379">
    <property type="entry name" value="GTPase_MnmE"/>
    <property type="match status" value="1"/>
</dbReference>
<dbReference type="InterPro" id="IPR031168">
    <property type="entry name" value="G_TrmE"/>
</dbReference>
<dbReference type="InterPro" id="IPR006073">
    <property type="entry name" value="GTP-bd"/>
</dbReference>
<dbReference type="InterPro" id="IPR018948">
    <property type="entry name" value="GTP-bd_TrmE_N"/>
</dbReference>
<dbReference type="InterPro" id="IPR004520">
    <property type="entry name" value="GTPase_MnmE"/>
</dbReference>
<dbReference type="InterPro" id="IPR027368">
    <property type="entry name" value="MnmE_dom2"/>
</dbReference>
<dbReference type="InterPro" id="IPR025867">
    <property type="entry name" value="MnmE_helical"/>
</dbReference>
<dbReference type="InterPro" id="IPR027417">
    <property type="entry name" value="P-loop_NTPase"/>
</dbReference>
<dbReference type="InterPro" id="IPR005225">
    <property type="entry name" value="Small_GTP-bd"/>
</dbReference>
<dbReference type="InterPro" id="IPR027266">
    <property type="entry name" value="TrmE/GcvT_dom1"/>
</dbReference>
<dbReference type="NCBIfam" id="TIGR00450">
    <property type="entry name" value="mnmE_trmE_thdF"/>
    <property type="match status" value="1"/>
</dbReference>
<dbReference type="NCBIfam" id="NF003661">
    <property type="entry name" value="PRK05291.1-3"/>
    <property type="match status" value="1"/>
</dbReference>
<dbReference type="NCBIfam" id="TIGR00231">
    <property type="entry name" value="small_GTP"/>
    <property type="match status" value="1"/>
</dbReference>
<dbReference type="PANTHER" id="PTHR42714">
    <property type="entry name" value="TRNA MODIFICATION GTPASE GTPBP3"/>
    <property type="match status" value="1"/>
</dbReference>
<dbReference type="PANTHER" id="PTHR42714:SF2">
    <property type="entry name" value="TRNA MODIFICATION GTPASE GTPBP3, MITOCHONDRIAL"/>
    <property type="match status" value="1"/>
</dbReference>
<dbReference type="Pfam" id="PF01926">
    <property type="entry name" value="MMR_HSR1"/>
    <property type="match status" value="1"/>
</dbReference>
<dbReference type="Pfam" id="PF12631">
    <property type="entry name" value="MnmE_helical"/>
    <property type="match status" value="1"/>
</dbReference>
<dbReference type="Pfam" id="PF10396">
    <property type="entry name" value="TrmE_N"/>
    <property type="match status" value="1"/>
</dbReference>
<dbReference type="PRINTS" id="PR00449">
    <property type="entry name" value="RASTRNSFRMNG"/>
</dbReference>
<dbReference type="SUPFAM" id="SSF52540">
    <property type="entry name" value="P-loop containing nucleoside triphosphate hydrolases"/>
    <property type="match status" value="1"/>
</dbReference>
<dbReference type="SUPFAM" id="SSF116878">
    <property type="entry name" value="TrmE connector domain"/>
    <property type="match status" value="1"/>
</dbReference>
<dbReference type="PROSITE" id="PS51709">
    <property type="entry name" value="G_TRME"/>
    <property type="match status" value="1"/>
</dbReference>
<feature type="chain" id="PRO_0000188869" description="tRNA modification GTPase MnmE">
    <location>
        <begin position="1"/>
        <end position="459"/>
    </location>
</feature>
<feature type="domain" description="TrmE-type G">
    <location>
        <begin position="223"/>
        <end position="381"/>
    </location>
</feature>
<feature type="binding site" evidence="1">
    <location>
        <position position="23"/>
    </location>
    <ligand>
        <name>(6S)-5-formyl-5,6,7,8-tetrahydrofolate</name>
        <dbReference type="ChEBI" id="CHEBI:57457"/>
    </ligand>
</feature>
<feature type="binding site" evidence="1">
    <location>
        <position position="88"/>
    </location>
    <ligand>
        <name>(6S)-5-formyl-5,6,7,8-tetrahydrofolate</name>
        <dbReference type="ChEBI" id="CHEBI:57457"/>
    </ligand>
</feature>
<feature type="binding site" evidence="1">
    <location>
        <position position="127"/>
    </location>
    <ligand>
        <name>(6S)-5-formyl-5,6,7,8-tetrahydrofolate</name>
        <dbReference type="ChEBI" id="CHEBI:57457"/>
    </ligand>
</feature>
<feature type="binding site" evidence="1">
    <location>
        <begin position="233"/>
        <end position="238"/>
    </location>
    <ligand>
        <name>GTP</name>
        <dbReference type="ChEBI" id="CHEBI:37565"/>
    </ligand>
</feature>
<feature type="binding site" evidence="1">
    <location>
        <position position="233"/>
    </location>
    <ligand>
        <name>K(+)</name>
        <dbReference type="ChEBI" id="CHEBI:29103"/>
    </ligand>
</feature>
<feature type="binding site" evidence="1">
    <location>
        <position position="237"/>
    </location>
    <ligand>
        <name>Mg(2+)</name>
        <dbReference type="ChEBI" id="CHEBI:18420"/>
    </ligand>
</feature>
<feature type="binding site" evidence="1">
    <location>
        <begin position="252"/>
        <end position="258"/>
    </location>
    <ligand>
        <name>GTP</name>
        <dbReference type="ChEBI" id="CHEBI:37565"/>
    </ligand>
</feature>
<feature type="binding site" evidence="1">
    <location>
        <position position="252"/>
    </location>
    <ligand>
        <name>K(+)</name>
        <dbReference type="ChEBI" id="CHEBI:29103"/>
    </ligand>
</feature>
<feature type="binding site" evidence="1">
    <location>
        <position position="254"/>
    </location>
    <ligand>
        <name>K(+)</name>
        <dbReference type="ChEBI" id="CHEBI:29103"/>
    </ligand>
</feature>
<feature type="binding site" evidence="1">
    <location>
        <position position="257"/>
    </location>
    <ligand>
        <name>K(+)</name>
        <dbReference type="ChEBI" id="CHEBI:29103"/>
    </ligand>
</feature>
<feature type="binding site" evidence="1">
    <location>
        <position position="258"/>
    </location>
    <ligand>
        <name>Mg(2+)</name>
        <dbReference type="ChEBI" id="CHEBI:18420"/>
    </ligand>
</feature>
<feature type="binding site" evidence="1">
    <location>
        <begin position="277"/>
        <end position="280"/>
    </location>
    <ligand>
        <name>GTP</name>
        <dbReference type="ChEBI" id="CHEBI:37565"/>
    </ligand>
</feature>
<feature type="binding site" evidence="1">
    <location>
        <position position="459"/>
    </location>
    <ligand>
        <name>(6S)-5-formyl-5,6,7,8-tetrahydrofolate</name>
        <dbReference type="ChEBI" id="CHEBI:57457"/>
    </ligand>
</feature>
<organism>
    <name type="scientific">Clostridium acetobutylicum (strain ATCC 824 / DSM 792 / JCM 1419 / IAM 19013 / LMG 5710 / NBRC 13948 / NRRL B-527 / VKM B-1787 / 2291 / W)</name>
    <dbReference type="NCBI Taxonomy" id="272562"/>
    <lineage>
        <taxon>Bacteria</taxon>
        <taxon>Bacillati</taxon>
        <taxon>Bacillota</taxon>
        <taxon>Clostridia</taxon>
        <taxon>Eubacteriales</taxon>
        <taxon>Clostridiaceae</taxon>
        <taxon>Clostridium</taxon>
    </lineage>
</organism>